<accession>Q1KXW2</accession>
<reference key="1">
    <citation type="submission" date="2006-01" db="EMBL/GenBank/DDBJ databases">
        <title>A comparison of the first two published chloroplast genomes in Asteraceae: Lactuca and Helianthus.</title>
        <authorList>
            <person name="Timme R.E."/>
            <person name="Kuehl J.V."/>
            <person name="Boore J.L."/>
            <person name="Jansen R.K."/>
        </authorList>
    </citation>
    <scope>NUCLEOTIDE SEQUENCE [LARGE SCALE GENOMIC DNA]</scope>
    <source>
        <strain>cv. HA383</strain>
    </source>
</reference>
<dbReference type="EMBL" id="DQ383815">
    <property type="protein sequence ID" value="ABD47143.1"/>
    <property type="molecule type" value="Genomic_DNA"/>
</dbReference>
<dbReference type="RefSeq" id="YP_588114.1">
    <property type="nucleotide sequence ID" value="NC_007977.1"/>
</dbReference>
<dbReference type="SMR" id="Q1KXW2"/>
<dbReference type="EnsemblPlants" id="mRNA:HanXRQr2_Chr03g0125741">
    <property type="protein sequence ID" value="CDS:HanXRQr2_Chr03g0125741.1"/>
    <property type="gene ID" value="HanXRQr2_Chr03g0125741"/>
</dbReference>
<dbReference type="GeneID" id="4055587"/>
<dbReference type="Gramene" id="mRNA:HanXRQr2_Chr03g0125741">
    <property type="protein sequence ID" value="CDS:HanXRQr2_Chr03g0125741.1"/>
    <property type="gene ID" value="HanXRQr2_Chr03g0125741"/>
</dbReference>
<dbReference type="KEGG" id="han:4055587"/>
<dbReference type="OrthoDB" id="1161947at2759"/>
<dbReference type="GO" id="GO:0009535">
    <property type="term" value="C:chloroplast thylakoid membrane"/>
    <property type="evidence" value="ECO:0007669"/>
    <property type="project" value="UniProtKB-SubCell"/>
</dbReference>
<dbReference type="GO" id="GO:0009539">
    <property type="term" value="C:photosystem II reaction center"/>
    <property type="evidence" value="ECO:0007669"/>
    <property type="project" value="InterPro"/>
</dbReference>
<dbReference type="GO" id="GO:0015979">
    <property type="term" value="P:photosynthesis"/>
    <property type="evidence" value="ECO:0007669"/>
    <property type="project" value="UniProtKB-UniRule"/>
</dbReference>
<dbReference type="GO" id="GO:0042549">
    <property type="term" value="P:photosystem II stabilization"/>
    <property type="evidence" value="ECO:0007669"/>
    <property type="project" value="InterPro"/>
</dbReference>
<dbReference type="FunFam" id="1.10.287.740:FF:000001">
    <property type="entry name" value="Photosystem II reaction center protein Z"/>
    <property type="match status" value="1"/>
</dbReference>
<dbReference type="Gene3D" id="1.10.287.740">
    <property type="entry name" value="Photosystem II PsbZ, reaction centre"/>
    <property type="match status" value="1"/>
</dbReference>
<dbReference type="HAMAP" id="MF_00644">
    <property type="entry name" value="PSII_PsbZ"/>
    <property type="match status" value="1"/>
</dbReference>
<dbReference type="InterPro" id="IPR002644">
    <property type="entry name" value="PSII_PsbZ"/>
</dbReference>
<dbReference type="InterPro" id="IPR036512">
    <property type="entry name" value="PSII_PsbZ_sf"/>
</dbReference>
<dbReference type="NCBIfam" id="TIGR03043">
    <property type="entry name" value="PS_II_psbZ"/>
    <property type="match status" value="1"/>
</dbReference>
<dbReference type="PANTHER" id="PTHR34971">
    <property type="entry name" value="PHOTOSYSTEM II REACTION CENTER PROTEIN Z"/>
    <property type="match status" value="1"/>
</dbReference>
<dbReference type="PANTHER" id="PTHR34971:SF2">
    <property type="entry name" value="PHOTOSYSTEM II REACTION CENTER PROTEIN Z"/>
    <property type="match status" value="1"/>
</dbReference>
<dbReference type="Pfam" id="PF01737">
    <property type="entry name" value="Ycf9"/>
    <property type="match status" value="1"/>
</dbReference>
<dbReference type="SUPFAM" id="SSF161055">
    <property type="entry name" value="PsbZ-like"/>
    <property type="match status" value="1"/>
</dbReference>
<proteinExistence type="inferred from homology"/>
<comment type="function">
    <text evidence="1">May control the interaction of photosystem II (PSII) cores with the light-harvesting antenna, regulates electron flow through the 2 photosystem reaction centers. PSII is a light-driven water plastoquinone oxidoreductase, using light energy to abstract electrons from H(2)O, generating a proton gradient subsequently used for ATP formation.</text>
</comment>
<comment type="subunit">
    <text evidence="1">PSII is composed of 1 copy each of membrane proteins PsbA, PsbB, PsbC, PsbD, PsbE, PsbF, PsbH, PsbI, PsbJ, PsbK, PsbL, PsbM, PsbT, PsbY, PsbZ, Psb30/Ycf12, at least 3 peripheral proteins of the oxygen-evolving complex and a large number of cofactors. It forms dimeric complexes.</text>
</comment>
<comment type="subcellular location">
    <subcellularLocation>
        <location evidence="1">Plastid</location>
        <location evidence="1">Chloroplast thylakoid membrane</location>
        <topology evidence="1">Multi-pass membrane protein</topology>
    </subcellularLocation>
</comment>
<comment type="similarity">
    <text evidence="1">Belongs to the PsbZ family.</text>
</comment>
<feature type="chain" id="PRO_0000277220" description="Photosystem II reaction center protein Z">
    <location>
        <begin position="1"/>
        <end position="62"/>
    </location>
</feature>
<feature type="transmembrane region" description="Helical" evidence="1">
    <location>
        <begin position="8"/>
        <end position="28"/>
    </location>
</feature>
<feature type="transmembrane region" description="Helical" evidence="1">
    <location>
        <begin position="41"/>
        <end position="61"/>
    </location>
</feature>
<sequence length="62" mass="6497">MTLAFQLAVFALIATSSILLIGVPVVFASPDGWSSNKNVVFSGTSLWIGLVFLVGILNSLIS</sequence>
<evidence type="ECO:0000255" key="1">
    <source>
        <dbReference type="HAMAP-Rule" id="MF_00644"/>
    </source>
</evidence>
<keyword id="KW-0150">Chloroplast</keyword>
<keyword id="KW-0472">Membrane</keyword>
<keyword id="KW-0602">Photosynthesis</keyword>
<keyword id="KW-0604">Photosystem II</keyword>
<keyword id="KW-0934">Plastid</keyword>
<keyword id="KW-0674">Reaction center</keyword>
<keyword id="KW-0793">Thylakoid</keyword>
<keyword id="KW-0812">Transmembrane</keyword>
<keyword id="KW-1133">Transmembrane helix</keyword>
<protein>
    <recommendedName>
        <fullName evidence="1">Photosystem II reaction center protein Z</fullName>
        <shortName evidence="1">PSII-Z</shortName>
    </recommendedName>
</protein>
<name>PSBZ_HELAN</name>
<organism>
    <name type="scientific">Helianthus annuus</name>
    <name type="common">Common sunflower</name>
    <dbReference type="NCBI Taxonomy" id="4232"/>
    <lineage>
        <taxon>Eukaryota</taxon>
        <taxon>Viridiplantae</taxon>
        <taxon>Streptophyta</taxon>
        <taxon>Embryophyta</taxon>
        <taxon>Tracheophyta</taxon>
        <taxon>Spermatophyta</taxon>
        <taxon>Magnoliopsida</taxon>
        <taxon>eudicotyledons</taxon>
        <taxon>Gunneridae</taxon>
        <taxon>Pentapetalae</taxon>
        <taxon>asterids</taxon>
        <taxon>campanulids</taxon>
        <taxon>Asterales</taxon>
        <taxon>Asteraceae</taxon>
        <taxon>Asteroideae</taxon>
        <taxon>Heliantheae alliance</taxon>
        <taxon>Heliantheae</taxon>
        <taxon>Helianthus</taxon>
    </lineage>
</organism>
<geneLocation type="chloroplast"/>
<gene>
    <name evidence="1" type="primary">psbZ</name>
</gene>